<feature type="chain" id="PRO_1000091188" description="D-alanine--D-alanine ligase">
    <location>
        <begin position="1"/>
        <end position="383"/>
    </location>
</feature>
<feature type="domain" description="ATP-grasp" evidence="2">
    <location>
        <begin position="164"/>
        <end position="373"/>
    </location>
</feature>
<feature type="binding site" evidence="2">
    <location>
        <begin position="196"/>
        <end position="251"/>
    </location>
    <ligand>
        <name>ATP</name>
        <dbReference type="ChEBI" id="CHEBI:30616"/>
    </ligand>
</feature>
<feature type="binding site" evidence="2">
    <location>
        <position position="327"/>
    </location>
    <ligand>
        <name>Mg(2+)</name>
        <dbReference type="ChEBI" id="CHEBI:18420"/>
        <label>1</label>
    </ligand>
</feature>
<feature type="binding site" evidence="2">
    <location>
        <position position="340"/>
    </location>
    <ligand>
        <name>Mg(2+)</name>
        <dbReference type="ChEBI" id="CHEBI:18420"/>
        <label>1</label>
    </ligand>
</feature>
<feature type="binding site" evidence="2">
    <location>
        <position position="340"/>
    </location>
    <ligand>
        <name>Mg(2+)</name>
        <dbReference type="ChEBI" id="CHEBI:18420"/>
        <label>2</label>
    </ligand>
</feature>
<feature type="binding site" evidence="2">
    <location>
        <position position="342"/>
    </location>
    <ligand>
        <name>Mg(2+)</name>
        <dbReference type="ChEBI" id="CHEBI:18420"/>
        <label>2</label>
    </ligand>
</feature>
<name>DDL_KOCRD</name>
<protein>
    <recommendedName>
        <fullName evidence="2">D-alanine--D-alanine ligase</fullName>
        <ecNumber evidence="2">6.3.2.4</ecNumber>
    </recommendedName>
    <alternativeName>
        <fullName evidence="2">D-Ala-D-Ala ligase</fullName>
    </alternativeName>
    <alternativeName>
        <fullName evidence="2">D-alanylalanine synthetase</fullName>
    </alternativeName>
</protein>
<accession>B2GFL1</accession>
<keyword id="KW-0067">ATP-binding</keyword>
<keyword id="KW-0133">Cell shape</keyword>
<keyword id="KW-0961">Cell wall biogenesis/degradation</keyword>
<keyword id="KW-0963">Cytoplasm</keyword>
<keyword id="KW-0436">Ligase</keyword>
<keyword id="KW-0460">Magnesium</keyword>
<keyword id="KW-0464">Manganese</keyword>
<keyword id="KW-0479">Metal-binding</keyword>
<keyword id="KW-0547">Nucleotide-binding</keyword>
<keyword id="KW-0573">Peptidoglycan synthesis</keyword>
<keyword id="KW-1185">Reference proteome</keyword>
<dbReference type="EC" id="6.3.2.4" evidence="2"/>
<dbReference type="EMBL" id="AP009152">
    <property type="protein sequence ID" value="BAG29384.1"/>
    <property type="molecule type" value="Genomic_DNA"/>
</dbReference>
<dbReference type="RefSeq" id="WP_012398105.1">
    <property type="nucleotide sequence ID" value="NC_010617.1"/>
</dbReference>
<dbReference type="SMR" id="B2GFL1"/>
<dbReference type="STRING" id="378753.KRH_10370"/>
<dbReference type="KEGG" id="krh:KRH_10370"/>
<dbReference type="eggNOG" id="COG1181">
    <property type="taxonomic scope" value="Bacteria"/>
</dbReference>
<dbReference type="HOGENOM" id="CLU_039268_0_1_11"/>
<dbReference type="OrthoDB" id="9813261at2"/>
<dbReference type="UniPathway" id="UPA00219"/>
<dbReference type="Proteomes" id="UP000008838">
    <property type="component" value="Chromosome"/>
</dbReference>
<dbReference type="GO" id="GO:0005829">
    <property type="term" value="C:cytosol"/>
    <property type="evidence" value="ECO:0007669"/>
    <property type="project" value="TreeGrafter"/>
</dbReference>
<dbReference type="GO" id="GO:0005524">
    <property type="term" value="F:ATP binding"/>
    <property type="evidence" value="ECO:0007669"/>
    <property type="project" value="UniProtKB-KW"/>
</dbReference>
<dbReference type="GO" id="GO:0008716">
    <property type="term" value="F:D-alanine-D-alanine ligase activity"/>
    <property type="evidence" value="ECO:0007669"/>
    <property type="project" value="UniProtKB-UniRule"/>
</dbReference>
<dbReference type="GO" id="GO:0046872">
    <property type="term" value="F:metal ion binding"/>
    <property type="evidence" value="ECO:0007669"/>
    <property type="project" value="UniProtKB-KW"/>
</dbReference>
<dbReference type="GO" id="GO:0071555">
    <property type="term" value="P:cell wall organization"/>
    <property type="evidence" value="ECO:0007669"/>
    <property type="project" value="UniProtKB-KW"/>
</dbReference>
<dbReference type="GO" id="GO:0009252">
    <property type="term" value="P:peptidoglycan biosynthetic process"/>
    <property type="evidence" value="ECO:0007669"/>
    <property type="project" value="UniProtKB-UniRule"/>
</dbReference>
<dbReference type="GO" id="GO:0008360">
    <property type="term" value="P:regulation of cell shape"/>
    <property type="evidence" value="ECO:0007669"/>
    <property type="project" value="UniProtKB-KW"/>
</dbReference>
<dbReference type="FunFam" id="3.30.470.20:FF:000008">
    <property type="entry name" value="D-alanine--D-alanine ligase"/>
    <property type="match status" value="1"/>
</dbReference>
<dbReference type="Gene3D" id="3.40.50.20">
    <property type="match status" value="1"/>
</dbReference>
<dbReference type="Gene3D" id="3.30.1490.20">
    <property type="entry name" value="ATP-grasp fold, A domain"/>
    <property type="match status" value="1"/>
</dbReference>
<dbReference type="Gene3D" id="3.30.470.20">
    <property type="entry name" value="ATP-grasp fold, B domain"/>
    <property type="match status" value="1"/>
</dbReference>
<dbReference type="HAMAP" id="MF_00047">
    <property type="entry name" value="Dala_Dala_lig"/>
    <property type="match status" value="1"/>
</dbReference>
<dbReference type="InterPro" id="IPR011761">
    <property type="entry name" value="ATP-grasp"/>
</dbReference>
<dbReference type="InterPro" id="IPR013815">
    <property type="entry name" value="ATP_grasp_subdomain_1"/>
</dbReference>
<dbReference type="InterPro" id="IPR000291">
    <property type="entry name" value="D-Ala_lig_Van_CS"/>
</dbReference>
<dbReference type="InterPro" id="IPR005905">
    <property type="entry name" value="D_ala_D_ala"/>
</dbReference>
<dbReference type="InterPro" id="IPR011095">
    <property type="entry name" value="Dala_Dala_lig_C"/>
</dbReference>
<dbReference type="InterPro" id="IPR011127">
    <property type="entry name" value="Dala_Dala_lig_N"/>
</dbReference>
<dbReference type="InterPro" id="IPR016185">
    <property type="entry name" value="PreATP-grasp_dom_sf"/>
</dbReference>
<dbReference type="NCBIfam" id="TIGR01205">
    <property type="entry name" value="D_ala_D_alaTIGR"/>
    <property type="match status" value="1"/>
</dbReference>
<dbReference type="NCBIfam" id="NF002528">
    <property type="entry name" value="PRK01966.1-4"/>
    <property type="match status" value="1"/>
</dbReference>
<dbReference type="PANTHER" id="PTHR23132">
    <property type="entry name" value="D-ALANINE--D-ALANINE LIGASE"/>
    <property type="match status" value="1"/>
</dbReference>
<dbReference type="PANTHER" id="PTHR23132:SF25">
    <property type="entry name" value="D-ALANINE--D-ALANINE LIGASE A"/>
    <property type="match status" value="1"/>
</dbReference>
<dbReference type="Pfam" id="PF07478">
    <property type="entry name" value="Dala_Dala_lig_C"/>
    <property type="match status" value="1"/>
</dbReference>
<dbReference type="Pfam" id="PF01820">
    <property type="entry name" value="Dala_Dala_lig_N"/>
    <property type="match status" value="1"/>
</dbReference>
<dbReference type="PIRSF" id="PIRSF039102">
    <property type="entry name" value="Ddl/VanB"/>
    <property type="match status" value="1"/>
</dbReference>
<dbReference type="SUPFAM" id="SSF56059">
    <property type="entry name" value="Glutathione synthetase ATP-binding domain-like"/>
    <property type="match status" value="1"/>
</dbReference>
<dbReference type="SUPFAM" id="SSF52440">
    <property type="entry name" value="PreATP-grasp domain"/>
    <property type="match status" value="1"/>
</dbReference>
<dbReference type="PROSITE" id="PS50975">
    <property type="entry name" value="ATP_GRASP"/>
    <property type="match status" value="1"/>
</dbReference>
<dbReference type="PROSITE" id="PS00843">
    <property type="entry name" value="DALA_DALA_LIGASE_1"/>
    <property type="match status" value="1"/>
</dbReference>
<dbReference type="PROSITE" id="PS00844">
    <property type="entry name" value="DALA_DALA_LIGASE_2"/>
    <property type="match status" value="1"/>
</dbReference>
<sequence>MSTTHETPEATAEGDKPCIAVVFGGRSSEHSISLITARSVLRAIDRDRWDVVSVGISTDGAWFLCSQEELEALLDDQPMAQLPVGVHRVSLPLQTGDSRLLIHDTSEHGAPLSRGRHIDAVFPLLHGPFGEDGTLQGMLELADLPYVGCGVAASAIGMDKHFMKLAFQAAGLEVGPYTVVHDRTWRTDPLGVREAVAELGFPVFVKPARAGSSFGITRVDEPSQLDAAIATAREHDLKLVVEAGIDGREIECAVLGGHGTDEARASLPGEIEVHGHALYDFEAKYVESDGATLSCPARLPEHVIDTLRRDAVRAFHAVDGEGLSRCDFFVTADERVLINEINTMPGFTPISMYPRMWAASGIDYSALIDELITLALERPVGLR</sequence>
<organism>
    <name type="scientific">Kocuria rhizophila (strain ATCC 9341 / DSM 348 / NBRC 103217 / DC2201)</name>
    <dbReference type="NCBI Taxonomy" id="378753"/>
    <lineage>
        <taxon>Bacteria</taxon>
        <taxon>Bacillati</taxon>
        <taxon>Actinomycetota</taxon>
        <taxon>Actinomycetes</taxon>
        <taxon>Micrococcales</taxon>
        <taxon>Micrococcaceae</taxon>
        <taxon>Kocuria</taxon>
    </lineage>
</organism>
<gene>
    <name evidence="2" type="primary">ddl</name>
    <name type="ordered locus">KRH_10370</name>
</gene>
<proteinExistence type="inferred from homology"/>
<reference key="1">
    <citation type="journal article" date="2008" name="J. Bacteriol.">
        <title>Complete genome sequence of the soil actinomycete Kocuria rhizophila.</title>
        <authorList>
            <person name="Takarada H."/>
            <person name="Sekine M."/>
            <person name="Kosugi H."/>
            <person name="Matsuo Y."/>
            <person name="Fujisawa T."/>
            <person name="Omata S."/>
            <person name="Kishi E."/>
            <person name="Shimizu A."/>
            <person name="Tsukatani N."/>
            <person name="Tanikawa S."/>
            <person name="Fujita N."/>
            <person name="Harayama S."/>
        </authorList>
    </citation>
    <scope>NUCLEOTIDE SEQUENCE [LARGE SCALE GENOMIC DNA]</scope>
    <source>
        <strain>ATCC 9341 / DSM 348 / NBRC 103217 / DC2201</strain>
    </source>
</reference>
<evidence type="ECO:0000250" key="1"/>
<evidence type="ECO:0000255" key="2">
    <source>
        <dbReference type="HAMAP-Rule" id="MF_00047"/>
    </source>
</evidence>
<comment type="function">
    <text evidence="2">Cell wall formation.</text>
</comment>
<comment type="catalytic activity">
    <reaction evidence="2">
        <text>2 D-alanine + ATP = D-alanyl-D-alanine + ADP + phosphate + H(+)</text>
        <dbReference type="Rhea" id="RHEA:11224"/>
        <dbReference type="ChEBI" id="CHEBI:15378"/>
        <dbReference type="ChEBI" id="CHEBI:30616"/>
        <dbReference type="ChEBI" id="CHEBI:43474"/>
        <dbReference type="ChEBI" id="CHEBI:57416"/>
        <dbReference type="ChEBI" id="CHEBI:57822"/>
        <dbReference type="ChEBI" id="CHEBI:456216"/>
        <dbReference type="EC" id="6.3.2.4"/>
    </reaction>
</comment>
<comment type="cofactor">
    <cofactor evidence="1">
        <name>Mg(2+)</name>
        <dbReference type="ChEBI" id="CHEBI:18420"/>
    </cofactor>
    <cofactor evidence="1">
        <name>Mn(2+)</name>
        <dbReference type="ChEBI" id="CHEBI:29035"/>
    </cofactor>
    <text evidence="1">Binds 2 magnesium or manganese ions per subunit.</text>
</comment>
<comment type="pathway">
    <text evidence="2">Cell wall biogenesis; peptidoglycan biosynthesis.</text>
</comment>
<comment type="subcellular location">
    <subcellularLocation>
        <location evidence="2">Cytoplasm</location>
    </subcellularLocation>
</comment>
<comment type="similarity">
    <text evidence="2">Belongs to the D-alanine--D-alanine ligase family.</text>
</comment>